<keyword id="KW-1003">Cell membrane</keyword>
<keyword id="KW-0472">Membrane</keyword>
<keyword id="KW-1185">Reference proteome</keyword>
<keyword id="KW-0812">Transmembrane</keyword>
<keyword id="KW-1133">Transmembrane helix</keyword>
<comment type="subcellular location">
    <subcellularLocation>
        <location evidence="2">Cell membrane</location>
        <topology evidence="2">Multi-pass membrane protein</topology>
    </subcellularLocation>
</comment>
<reference key="1">
    <citation type="journal article" date="1995" name="Science">
        <title>Whole-genome random sequencing and assembly of Haemophilus influenzae Rd.</title>
        <authorList>
            <person name="Fleischmann R.D."/>
            <person name="Adams M.D."/>
            <person name="White O."/>
            <person name="Clayton R.A."/>
            <person name="Kirkness E.F."/>
            <person name="Kerlavage A.R."/>
            <person name="Bult C.J."/>
            <person name="Tomb J.-F."/>
            <person name="Dougherty B.A."/>
            <person name="Merrick J.M."/>
            <person name="McKenney K."/>
            <person name="Sutton G.G."/>
            <person name="FitzHugh W."/>
            <person name="Fields C.A."/>
            <person name="Gocayne J.D."/>
            <person name="Scott J.D."/>
            <person name="Shirley R."/>
            <person name="Liu L.-I."/>
            <person name="Glodek A."/>
            <person name="Kelley J.M."/>
            <person name="Weidman J.F."/>
            <person name="Phillips C.A."/>
            <person name="Spriggs T."/>
            <person name="Hedblom E."/>
            <person name="Cotton M.D."/>
            <person name="Utterback T.R."/>
            <person name="Hanna M.C."/>
            <person name="Nguyen D.T."/>
            <person name="Saudek D.M."/>
            <person name="Brandon R.C."/>
            <person name="Fine L.D."/>
            <person name="Fritchman J.L."/>
            <person name="Fuhrmann J.L."/>
            <person name="Geoghagen N.S.M."/>
            <person name="Gnehm C.L."/>
            <person name="McDonald L.A."/>
            <person name="Small K.V."/>
            <person name="Fraser C.M."/>
            <person name="Smith H.O."/>
            <person name="Venter J.C."/>
        </authorList>
    </citation>
    <scope>NUCLEOTIDE SEQUENCE [LARGE SCALE GENOMIC DNA]</scope>
    <source>
        <strain>ATCC 51907 / DSM 11121 / KW20 / Rd</strain>
    </source>
</reference>
<reference key="2">
    <citation type="submission" date="1998-05" db="EMBL/GenBank/DDBJ databases">
        <authorList>
            <person name="White O."/>
            <person name="Clayton R.A."/>
            <person name="Kerlavage A.R."/>
            <person name="Fleischmann R.D."/>
            <person name="Peterson J."/>
            <person name="Hickey E."/>
            <person name="Dodson R."/>
            <person name="Gwinn M."/>
        </authorList>
    </citation>
    <scope>IDENTIFICATION</scope>
</reference>
<name>Y870A_HAEIN</name>
<protein>
    <recommendedName>
        <fullName>Uncharacterized protein HI_0870.1</fullName>
    </recommendedName>
</protein>
<feature type="chain" id="PRO_0000077965" description="Uncharacterized protein HI_0870.1">
    <location>
        <begin position="1"/>
        <end position="96"/>
    </location>
</feature>
<feature type="transmembrane region" description="Helical" evidence="1">
    <location>
        <begin position="27"/>
        <end position="47"/>
    </location>
</feature>
<feature type="transmembrane region" description="Helical" evidence="1">
    <location>
        <begin position="50"/>
        <end position="70"/>
    </location>
</feature>
<proteinExistence type="predicted"/>
<accession>O86229</accession>
<organism>
    <name type="scientific">Haemophilus influenzae (strain ATCC 51907 / DSM 11121 / KW20 / Rd)</name>
    <dbReference type="NCBI Taxonomy" id="71421"/>
    <lineage>
        <taxon>Bacteria</taxon>
        <taxon>Pseudomonadati</taxon>
        <taxon>Pseudomonadota</taxon>
        <taxon>Gammaproteobacteria</taxon>
        <taxon>Pasteurellales</taxon>
        <taxon>Pasteurellaceae</taxon>
        <taxon>Haemophilus</taxon>
    </lineage>
</organism>
<evidence type="ECO:0000255" key="1"/>
<evidence type="ECO:0000305" key="2"/>
<sequence>MVLYFYNKINRSFGLMILLYFFRSGGLAFRISELFLIFSIPLFALLINELSGVNRVLMFFILVYYISIVFLRRIYVHVVFGVNTFLPYKPIFDSYL</sequence>
<dbReference type="EMBL" id="L42023">
    <property type="protein sequence ID" value="AAC22539.1"/>
    <property type="molecule type" value="Genomic_DNA"/>
</dbReference>
<dbReference type="STRING" id="71421.HI_0870.1"/>
<dbReference type="EnsemblBacteria" id="AAC22539">
    <property type="protein sequence ID" value="AAC22539"/>
    <property type="gene ID" value="HI_0870.1"/>
</dbReference>
<dbReference type="KEGG" id="hin:HI_0870.1"/>
<dbReference type="HOGENOM" id="CLU_2355784_0_0_6"/>
<dbReference type="Proteomes" id="UP000000579">
    <property type="component" value="Chromosome"/>
</dbReference>
<dbReference type="GO" id="GO:0005886">
    <property type="term" value="C:plasma membrane"/>
    <property type="evidence" value="ECO:0007669"/>
    <property type="project" value="UniProtKB-SubCell"/>
</dbReference>
<gene>
    <name type="ordered locus">HI_0870.1</name>
</gene>